<name>YKOM_BACSU</name>
<evidence type="ECO:0000255" key="1">
    <source>
        <dbReference type="PROSITE-ProRule" id="PRU00345"/>
    </source>
</evidence>
<proteinExistence type="predicted"/>
<gene>
    <name type="primary">ykoM</name>
    <name type="ordered locus">BSU13340</name>
</gene>
<feature type="chain" id="PRO_0000360553" description="Uncharacterized HTH-type transcriptional regulator YkoM">
    <location>
        <begin position="1"/>
        <end position="154"/>
    </location>
</feature>
<feature type="domain" description="HTH marR-type" evidence="1">
    <location>
        <begin position="14"/>
        <end position="146"/>
    </location>
</feature>
<feature type="DNA-binding region" description="H-T-H motif" evidence="1">
    <location>
        <begin position="60"/>
        <end position="83"/>
    </location>
</feature>
<organism>
    <name type="scientific">Bacillus subtilis (strain 168)</name>
    <dbReference type="NCBI Taxonomy" id="224308"/>
    <lineage>
        <taxon>Bacteria</taxon>
        <taxon>Bacillati</taxon>
        <taxon>Bacillota</taxon>
        <taxon>Bacilli</taxon>
        <taxon>Bacillales</taxon>
        <taxon>Bacillaceae</taxon>
        <taxon>Bacillus</taxon>
    </lineage>
</organism>
<dbReference type="EMBL" id="AJ002571">
    <property type="protein sequence ID" value="CAA05611.1"/>
    <property type="molecule type" value="Genomic_DNA"/>
</dbReference>
<dbReference type="EMBL" id="AL009126">
    <property type="protein sequence ID" value="CAB13191.1"/>
    <property type="molecule type" value="Genomic_DNA"/>
</dbReference>
<dbReference type="PIR" id="A69860">
    <property type="entry name" value="A69860"/>
</dbReference>
<dbReference type="RefSeq" id="NP_389217.1">
    <property type="nucleotide sequence ID" value="NC_000964.3"/>
</dbReference>
<dbReference type="RefSeq" id="WP_003232536.1">
    <property type="nucleotide sequence ID" value="NZ_OZ025638.1"/>
</dbReference>
<dbReference type="SMR" id="O34949"/>
<dbReference type="FunCoup" id="O34949">
    <property type="interactions" value="133"/>
</dbReference>
<dbReference type="STRING" id="224308.BSU13340"/>
<dbReference type="PaxDb" id="224308-BSU13340"/>
<dbReference type="EnsemblBacteria" id="CAB13191">
    <property type="protein sequence ID" value="CAB13191"/>
    <property type="gene ID" value="BSU_13340"/>
</dbReference>
<dbReference type="GeneID" id="939824"/>
<dbReference type="KEGG" id="bsu:BSU13340"/>
<dbReference type="PATRIC" id="fig|224308.43.peg.1407"/>
<dbReference type="eggNOG" id="COG1846">
    <property type="taxonomic scope" value="Bacteria"/>
</dbReference>
<dbReference type="InParanoid" id="O34949"/>
<dbReference type="OrthoDB" id="9799747at2"/>
<dbReference type="PhylomeDB" id="O34949"/>
<dbReference type="BioCyc" id="BSUB:BSU13340-MONOMER"/>
<dbReference type="Proteomes" id="UP000001570">
    <property type="component" value="Chromosome"/>
</dbReference>
<dbReference type="GO" id="GO:0003677">
    <property type="term" value="F:DNA binding"/>
    <property type="evidence" value="ECO:0007669"/>
    <property type="project" value="UniProtKB-KW"/>
</dbReference>
<dbReference type="GO" id="GO:0003700">
    <property type="term" value="F:DNA-binding transcription factor activity"/>
    <property type="evidence" value="ECO:0007669"/>
    <property type="project" value="InterPro"/>
</dbReference>
<dbReference type="GO" id="GO:0006355">
    <property type="term" value="P:regulation of DNA-templated transcription"/>
    <property type="evidence" value="ECO:0000318"/>
    <property type="project" value="GO_Central"/>
</dbReference>
<dbReference type="GO" id="GO:0006950">
    <property type="term" value="P:response to stress"/>
    <property type="evidence" value="ECO:0000318"/>
    <property type="project" value="GO_Central"/>
</dbReference>
<dbReference type="FunFam" id="1.10.10.10:FF:000596">
    <property type="entry name" value="MarR family transcriptional regulator"/>
    <property type="match status" value="1"/>
</dbReference>
<dbReference type="Gene3D" id="1.10.10.10">
    <property type="entry name" value="Winged helix-like DNA-binding domain superfamily/Winged helix DNA-binding domain"/>
    <property type="match status" value="1"/>
</dbReference>
<dbReference type="InterPro" id="IPR000835">
    <property type="entry name" value="HTH_MarR-typ"/>
</dbReference>
<dbReference type="InterPro" id="IPR039422">
    <property type="entry name" value="MarR/SlyA-like"/>
</dbReference>
<dbReference type="InterPro" id="IPR023187">
    <property type="entry name" value="Tscrpt_reg_MarR-type_CS"/>
</dbReference>
<dbReference type="InterPro" id="IPR036388">
    <property type="entry name" value="WH-like_DNA-bd_sf"/>
</dbReference>
<dbReference type="InterPro" id="IPR036390">
    <property type="entry name" value="WH_DNA-bd_sf"/>
</dbReference>
<dbReference type="PANTHER" id="PTHR33164:SF56">
    <property type="entry name" value="HTH-TYPE TRANSCRIPTIONAL REGULATOR MHQR"/>
    <property type="match status" value="1"/>
</dbReference>
<dbReference type="PANTHER" id="PTHR33164">
    <property type="entry name" value="TRANSCRIPTIONAL REGULATOR, MARR FAMILY"/>
    <property type="match status" value="1"/>
</dbReference>
<dbReference type="Pfam" id="PF01047">
    <property type="entry name" value="MarR"/>
    <property type="match status" value="1"/>
</dbReference>
<dbReference type="PRINTS" id="PR00598">
    <property type="entry name" value="HTHMARR"/>
</dbReference>
<dbReference type="SMART" id="SM00347">
    <property type="entry name" value="HTH_MARR"/>
    <property type="match status" value="1"/>
</dbReference>
<dbReference type="SUPFAM" id="SSF46785">
    <property type="entry name" value="Winged helix' DNA-binding domain"/>
    <property type="match status" value="1"/>
</dbReference>
<dbReference type="PROSITE" id="PS01117">
    <property type="entry name" value="HTH_MARR_1"/>
    <property type="match status" value="1"/>
</dbReference>
<dbReference type="PROSITE" id="PS50995">
    <property type="entry name" value="HTH_MARR_2"/>
    <property type="match status" value="1"/>
</dbReference>
<accession>O34949</accession>
<accession>Q796L2</accession>
<sequence length="154" mass="17858">MMRLSFNEEEVERAMNLYRVFARAFKSVSEHSIRDSKEHGFNPTEFAVLELLYTRGPQKLQQIGSRLLLVSGNVTYVIDKLERNGFLVREQDPKDKRSVYAHLTDKGNEYLDKIYPIHALRIARAFSGLSPDEQDQLIVLLKKAGIHSQHLLFR</sequence>
<keyword id="KW-0238">DNA-binding</keyword>
<keyword id="KW-1185">Reference proteome</keyword>
<keyword id="KW-0804">Transcription</keyword>
<keyword id="KW-0805">Transcription regulation</keyword>
<reference key="1">
    <citation type="submission" date="1997-11" db="EMBL/GenBank/DDBJ databases">
        <title>Sequence of the Bacillus subtilis genome between xlyA and ykoR.</title>
        <authorList>
            <person name="Devine K.M."/>
        </authorList>
    </citation>
    <scope>NUCLEOTIDE SEQUENCE [GENOMIC DNA]</scope>
    <source>
        <strain>168</strain>
    </source>
</reference>
<reference key="2">
    <citation type="journal article" date="1997" name="Nature">
        <title>The complete genome sequence of the Gram-positive bacterium Bacillus subtilis.</title>
        <authorList>
            <person name="Kunst F."/>
            <person name="Ogasawara N."/>
            <person name="Moszer I."/>
            <person name="Albertini A.M."/>
            <person name="Alloni G."/>
            <person name="Azevedo V."/>
            <person name="Bertero M.G."/>
            <person name="Bessieres P."/>
            <person name="Bolotin A."/>
            <person name="Borchert S."/>
            <person name="Borriss R."/>
            <person name="Boursier L."/>
            <person name="Brans A."/>
            <person name="Braun M."/>
            <person name="Brignell S.C."/>
            <person name="Bron S."/>
            <person name="Brouillet S."/>
            <person name="Bruschi C.V."/>
            <person name="Caldwell B."/>
            <person name="Capuano V."/>
            <person name="Carter N.M."/>
            <person name="Choi S.-K."/>
            <person name="Codani J.-J."/>
            <person name="Connerton I.F."/>
            <person name="Cummings N.J."/>
            <person name="Daniel R.A."/>
            <person name="Denizot F."/>
            <person name="Devine K.M."/>
            <person name="Duesterhoeft A."/>
            <person name="Ehrlich S.D."/>
            <person name="Emmerson P.T."/>
            <person name="Entian K.-D."/>
            <person name="Errington J."/>
            <person name="Fabret C."/>
            <person name="Ferrari E."/>
            <person name="Foulger D."/>
            <person name="Fritz C."/>
            <person name="Fujita M."/>
            <person name="Fujita Y."/>
            <person name="Fuma S."/>
            <person name="Galizzi A."/>
            <person name="Galleron N."/>
            <person name="Ghim S.-Y."/>
            <person name="Glaser P."/>
            <person name="Goffeau A."/>
            <person name="Golightly E.J."/>
            <person name="Grandi G."/>
            <person name="Guiseppi G."/>
            <person name="Guy B.J."/>
            <person name="Haga K."/>
            <person name="Haiech J."/>
            <person name="Harwood C.R."/>
            <person name="Henaut A."/>
            <person name="Hilbert H."/>
            <person name="Holsappel S."/>
            <person name="Hosono S."/>
            <person name="Hullo M.-F."/>
            <person name="Itaya M."/>
            <person name="Jones L.-M."/>
            <person name="Joris B."/>
            <person name="Karamata D."/>
            <person name="Kasahara Y."/>
            <person name="Klaerr-Blanchard M."/>
            <person name="Klein C."/>
            <person name="Kobayashi Y."/>
            <person name="Koetter P."/>
            <person name="Koningstein G."/>
            <person name="Krogh S."/>
            <person name="Kumano M."/>
            <person name="Kurita K."/>
            <person name="Lapidus A."/>
            <person name="Lardinois S."/>
            <person name="Lauber J."/>
            <person name="Lazarevic V."/>
            <person name="Lee S.-M."/>
            <person name="Levine A."/>
            <person name="Liu H."/>
            <person name="Masuda S."/>
            <person name="Mauel C."/>
            <person name="Medigue C."/>
            <person name="Medina N."/>
            <person name="Mellado R.P."/>
            <person name="Mizuno M."/>
            <person name="Moestl D."/>
            <person name="Nakai S."/>
            <person name="Noback M."/>
            <person name="Noone D."/>
            <person name="O'Reilly M."/>
            <person name="Ogawa K."/>
            <person name="Ogiwara A."/>
            <person name="Oudega B."/>
            <person name="Park S.-H."/>
            <person name="Parro V."/>
            <person name="Pohl T.M."/>
            <person name="Portetelle D."/>
            <person name="Porwollik S."/>
            <person name="Prescott A.M."/>
            <person name="Presecan E."/>
            <person name="Pujic P."/>
            <person name="Purnelle B."/>
            <person name="Rapoport G."/>
            <person name="Rey M."/>
            <person name="Reynolds S."/>
            <person name="Rieger M."/>
            <person name="Rivolta C."/>
            <person name="Rocha E."/>
            <person name="Roche B."/>
            <person name="Rose M."/>
            <person name="Sadaie Y."/>
            <person name="Sato T."/>
            <person name="Scanlan E."/>
            <person name="Schleich S."/>
            <person name="Schroeter R."/>
            <person name="Scoffone F."/>
            <person name="Sekiguchi J."/>
            <person name="Sekowska A."/>
            <person name="Seror S.J."/>
            <person name="Serror P."/>
            <person name="Shin B.-S."/>
            <person name="Soldo B."/>
            <person name="Sorokin A."/>
            <person name="Tacconi E."/>
            <person name="Takagi T."/>
            <person name="Takahashi H."/>
            <person name="Takemaru K."/>
            <person name="Takeuchi M."/>
            <person name="Tamakoshi A."/>
            <person name="Tanaka T."/>
            <person name="Terpstra P."/>
            <person name="Tognoni A."/>
            <person name="Tosato V."/>
            <person name="Uchiyama S."/>
            <person name="Vandenbol M."/>
            <person name="Vannier F."/>
            <person name="Vassarotti A."/>
            <person name="Viari A."/>
            <person name="Wambutt R."/>
            <person name="Wedler E."/>
            <person name="Wedler H."/>
            <person name="Weitzenegger T."/>
            <person name="Winters P."/>
            <person name="Wipat A."/>
            <person name="Yamamoto H."/>
            <person name="Yamane K."/>
            <person name="Yasumoto K."/>
            <person name="Yata K."/>
            <person name="Yoshida K."/>
            <person name="Yoshikawa H.-F."/>
            <person name="Zumstein E."/>
            <person name="Yoshikawa H."/>
            <person name="Danchin A."/>
        </authorList>
    </citation>
    <scope>NUCLEOTIDE SEQUENCE [LARGE SCALE GENOMIC DNA]</scope>
    <source>
        <strain>168</strain>
    </source>
</reference>
<protein>
    <recommendedName>
        <fullName>Uncharacterized HTH-type transcriptional regulator YkoM</fullName>
    </recommendedName>
</protein>